<gene>
    <name evidence="2" type="primary">recA</name>
    <name type="ordered locus">SPA2687</name>
</gene>
<protein>
    <recommendedName>
        <fullName evidence="2">Protein RecA</fullName>
    </recommendedName>
    <alternativeName>
        <fullName evidence="2">Recombinase A</fullName>
    </alternativeName>
</protein>
<reference key="1">
    <citation type="journal article" date="2004" name="Nat. Genet.">
        <title>Comparison of genome degradation in Paratyphi A and Typhi, human-restricted serovars of Salmonella enterica that cause typhoid.</title>
        <authorList>
            <person name="McClelland M."/>
            <person name="Sanderson K.E."/>
            <person name="Clifton S.W."/>
            <person name="Latreille P."/>
            <person name="Porwollik S."/>
            <person name="Sabo A."/>
            <person name="Meyer R."/>
            <person name="Bieri T."/>
            <person name="Ozersky P."/>
            <person name="McLellan M."/>
            <person name="Harkins C.R."/>
            <person name="Wang C."/>
            <person name="Nguyen C."/>
            <person name="Berghoff A."/>
            <person name="Elliott G."/>
            <person name="Kohlberg S."/>
            <person name="Strong C."/>
            <person name="Du F."/>
            <person name="Carter J."/>
            <person name="Kremizki C."/>
            <person name="Layman D."/>
            <person name="Leonard S."/>
            <person name="Sun H."/>
            <person name="Fulton L."/>
            <person name="Nash W."/>
            <person name="Miner T."/>
            <person name="Minx P."/>
            <person name="Delehaunty K."/>
            <person name="Fronick C."/>
            <person name="Magrini V."/>
            <person name="Nhan M."/>
            <person name="Warren W."/>
            <person name="Florea L."/>
            <person name="Spieth J."/>
            <person name="Wilson R.K."/>
        </authorList>
    </citation>
    <scope>NUCLEOTIDE SEQUENCE [LARGE SCALE GENOMIC DNA]</scope>
    <source>
        <strain>ATCC 9150 / SARB42</strain>
    </source>
</reference>
<name>RECA_SALPA</name>
<proteinExistence type="inferred from homology"/>
<sequence length="353" mass="37962">MAIDENKQKALAAAMGQIEKQFGKGSIMRLGEDRSMDVETISTGSLSLDIALGAGGLPMGRIVEIYGPESSGKTTLTLQVIAAAQREGKTCAFIDAEHALDPVYARKLGVDIDNLLCSQPDTGEQALEICDALARSGAVDVIVVDSVAALTPKAEIEGEIGDSHMGLAARMMSQAMRKLAGNLKQSNTLLIFINQIRMKIGVMFGNPETTTGGNALKFYASVRLDIRRIGAVKEGDNVVGSETRVKVVKNKIAAPFKQAEFQILYGEGINFYGELVDLGVKEKLIEKAGAWYSYNGEKIGQGKANATTWLKENPATAKEIEKRVRELLLSNQNATPDFAVDDSEGVAETNEDF</sequence>
<dbReference type="EMBL" id="CP000026">
    <property type="protein sequence ID" value="AAV78544.1"/>
    <property type="molecule type" value="Genomic_DNA"/>
</dbReference>
<dbReference type="RefSeq" id="WP_000963154.1">
    <property type="nucleotide sequence ID" value="NC_006511.1"/>
</dbReference>
<dbReference type="SMR" id="Q5PF15"/>
<dbReference type="KEGG" id="spt:SPA2687"/>
<dbReference type="HOGENOM" id="CLU_040469_3_2_6"/>
<dbReference type="Proteomes" id="UP000008185">
    <property type="component" value="Chromosome"/>
</dbReference>
<dbReference type="GO" id="GO:0005829">
    <property type="term" value="C:cytosol"/>
    <property type="evidence" value="ECO:0007669"/>
    <property type="project" value="TreeGrafter"/>
</dbReference>
<dbReference type="GO" id="GO:0005524">
    <property type="term" value="F:ATP binding"/>
    <property type="evidence" value="ECO:0007669"/>
    <property type="project" value="UniProtKB-UniRule"/>
</dbReference>
<dbReference type="GO" id="GO:0016887">
    <property type="term" value="F:ATP hydrolysis activity"/>
    <property type="evidence" value="ECO:0007669"/>
    <property type="project" value="InterPro"/>
</dbReference>
<dbReference type="GO" id="GO:0140664">
    <property type="term" value="F:ATP-dependent DNA damage sensor activity"/>
    <property type="evidence" value="ECO:0007669"/>
    <property type="project" value="InterPro"/>
</dbReference>
<dbReference type="GO" id="GO:0003684">
    <property type="term" value="F:damaged DNA binding"/>
    <property type="evidence" value="ECO:0007669"/>
    <property type="project" value="UniProtKB-UniRule"/>
</dbReference>
<dbReference type="GO" id="GO:0003697">
    <property type="term" value="F:single-stranded DNA binding"/>
    <property type="evidence" value="ECO:0007669"/>
    <property type="project" value="UniProtKB-UniRule"/>
</dbReference>
<dbReference type="GO" id="GO:0006310">
    <property type="term" value="P:DNA recombination"/>
    <property type="evidence" value="ECO:0007669"/>
    <property type="project" value="UniProtKB-UniRule"/>
</dbReference>
<dbReference type="GO" id="GO:0006281">
    <property type="term" value="P:DNA repair"/>
    <property type="evidence" value="ECO:0007669"/>
    <property type="project" value="UniProtKB-UniRule"/>
</dbReference>
<dbReference type="GO" id="GO:0009432">
    <property type="term" value="P:SOS response"/>
    <property type="evidence" value="ECO:0007669"/>
    <property type="project" value="UniProtKB-UniRule"/>
</dbReference>
<dbReference type="CDD" id="cd00983">
    <property type="entry name" value="RecA"/>
    <property type="match status" value="1"/>
</dbReference>
<dbReference type="FunFam" id="3.40.50.300:FF:000087">
    <property type="entry name" value="Recombinase RecA"/>
    <property type="match status" value="1"/>
</dbReference>
<dbReference type="Gene3D" id="3.40.50.300">
    <property type="entry name" value="P-loop containing nucleotide triphosphate hydrolases"/>
    <property type="match status" value="1"/>
</dbReference>
<dbReference type="HAMAP" id="MF_00268">
    <property type="entry name" value="RecA"/>
    <property type="match status" value="1"/>
</dbReference>
<dbReference type="InterPro" id="IPR003593">
    <property type="entry name" value="AAA+_ATPase"/>
</dbReference>
<dbReference type="InterPro" id="IPR013765">
    <property type="entry name" value="DNA_recomb/repair_RecA"/>
</dbReference>
<dbReference type="InterPro" id="IPR020584">
    <property type="entry name" value="DNA_recomb/repair_RecA_CS"/>
</dbReference>
<dbReference type="InterPro" id="IPR027417">
    <property type="entry name" value="P-loop_NTPase"/>
</dbReference>
<dbReference type="InterPro" id="IPR049261">
    <property type="entry name" value="RecA-like_C"/>
</dbReference>
<dbReference type="InterPro" id="IPR049428">
    <property type="entry name" value="RecA-like_N"/>
</dbReference>
<dbReference type="InterPro" id="IPR020588">
    <property type="entry name" value="RecA_ATP-bd"/>
</dbReference>
<dbReference type="InterPro" id="IPR023400">
    <property type="entry name" value="RecA_C_sf"/>
</dbReference>
<dbReference type="InterPro" id="IPR020587">
    <property type="entry name" value="RecA_monomer-monomer_interface"/>
</dbReference>
<dbReference type="NCBIfam" id="TIGR02012">
    <property type="entry name" value="tigrfam_recA"/>
    <property type="match status" value="1"/>
</dbReference>
<dbReference type="PANTHER" id="PTHR45900:SF1">
    <property type="entry name" value="MITOCHONDRIAL DNA REPAIR PROTEIN RECA HOMOLOG-RELATED"/>
    <property type="match status" value="1"/>
</dbReference>
<dbReference type="PANTHER" id="PTHR45900">
    <property type="entry name" value="RECA"/>
    <property type="match status" value="1"/>
</dbReference>
<dbReference type="Pfam" id="PF00154">
    <property type="entry name" value="RecA"/>
    <property type="match status" value="1"/>
</dbReference>
<dbReference type="Pfam" id="PF21096">
    <property type="entry name" value="RecA_C"/>
    <property type="match status" value="1"/>
</dbReference>
<dbReference type="PRINTS" id="PR00142">
    <property type="entry name" value="RECA"/>
</dbReference>
<dbReference type="SMART" id="SM00382">
    <property type="entry name" value="AAA"/>
    <property type="match status" value="1"/>
</dbReference>
<dbReference type="SUPFAM" id="SSF52540">
    <property type="entry name" value="P-loop containing nucleoside triphosphate hydrolases"/>
    <property type="match status" value="1"/>
</dbReference>
<dbReference type="SUPFAM" id="SSF54752">
    <property type="entry name" value="RecA protein, C-terminal domain"/>
    <property type="match status" value="1"/>
</dbReference>
<dbReference type="PROSITE" id="PS00321">
    <property type="entry name" value="RECA_1"/>
    <property type="match status" value="1"/>
</dbReference>
<dbReference type="PROSITE" id="PS50162">
    <property type="entry name" value="RECA_2"/>
    <property type="match status" value="1"/>
</dbReference>
<dbReference type="PROSITE" id="PS50163">
    <property type="entry name" value="RECA_3"/>
    <property type="match status" value="1"/>
</dbReference>
<keyword id="KW-0067">ATP-binding</keyword>
<keyword id="KW-0963">Cytoplasm</keyword>
<keyword id="KW-0227">DNA damage</keyword>
<keyword id="KW-0233">DNA recombination</keyword>
<keyword id="KW-0234">DNA repair</keyword>
<keyword id="KW-0238">DNA-binding</keyword>
<keyword id="KW-0547">Nucleotide-binding</keyword>
<keyword id="KW-0742">SOS response</keyword>
<organism>
    <name type="scientific">Salmonella paratyphi A (strain ATCC 9150 / SARB42)</name>
    <dbReference type="NCBI Taxonomy" id="295319"/>
    <lineage>
        <taxon>Bacteria</taxon>
        <taxon>Pseudomonadati</taxon>
        <taxon>Pseudomonadota</taxon>
        <taxon>Gammaproteobacteria</taxon>
        <taxon>Enterobacterales</taxon>
        <taxon>Enterobacteriaceae</taxon>
        <taxon>Salmonella</taxon>
    </lineage>
</organism>
<evidence type="ECO:0000250" key="1"/>
<evidence type="ECO:0000255" key="2">
    <source>
        <dbReference type="HAMAP-Rule" id="MF_00268"/>
    </source>
</evidence>
<comment type="function">
    <text evidence="2">Can catalyze the hydrolysis of ATP in the presence of single-stranded DNA, the ATP-dependent uptake of single-stranded DNA by duplex DNA, and the ATP-dependent hybridization of homologous single-stranded DNAs. It interacts with LexA causing its activation and leading to its autocatalytic cleavage.</text>
</comment>
<comment type="subcellular location">
    <subcellularLocation>
        <location evidence="2">Cytoplasm</location>
    </subcellularLocation>
</comment>
<comment type="similarity">
    <text evidence="2">Belongs to the RecA family.</text>
</comment>
<feature type="initiator methionine" description="Removed" evidence="1">
    <location>
        <position position="1"/>
    </location>
</feature>
<feature type="chain" id="PRO_0000122827" description="Protein RecA">
    <location>
        <begin position="2"/>
        <end position="353"/>
    </location>
</feature>
<feature type="binding site" evidence="2">
    <location>
        <begin position="67"/>
        <end position="74"/>
    </location>
    <ligand>
        <name>ATP</name>
        <dbReference type="ChEBI" id="CHEBI:30616"/>
    </ligand>
</feature>
<accession>Q5PF15</accession>